<comment type="subcellular location">
    <subcellularLocation>
        <location evidence="2">Membrane</location>
        <topology evidence="2">Single-pass membrane protein</topology>
    </subcellularLocation>
</comment>
<comment type="similarity">
    <text evidence="2">Belongs to the band 7/mec-2 family.</text>
</comment>
<proteinExistence type="inferred from homology"/>
<accession>O28852</accession>
<sequence length="249" mass="28346">MEWYWIGLLIVVVLFLLSAVRIVKEYERGVIFRLGRLVGARGPGLFFIIPILENMVVVDLRTVTYDVPSQEVVTKDNVTVKVNAVVYYRVVDPAKAVTEVFDYQYATAQLAQTTLRSIIGQAELDEVLSERDKLNVKLQQIIDEETNPWGIKVTAVEIKDVELPEEMRRIMAMQAEAERERRSKIIRAEGEYQAAMKLREAADVLAQSEGAILLRYLQTLNEISAEQNTTIVMPIPVELLKFFVEKAKS</sequence>
<dbReference type="EMBL" id="AE000782">
    <property type="protein sequence ID" value="AAB89829.1"/>
    <property type="molecule type" value="Genomic_DNA"/>
</dbReference>
<dbReference type="PIR" id="C69427">
    <property type="entry name" value="C69427"/>
</dbReference>
<dbReference type="RefSeq" id="WP_010878917.1">
    <property type="nucleotide sequence ID" value="NC_000917.1"/>
</dbReference>
<dbReference type="SMR" id="O28852"/>
<dbReference type="STRING" id="224325.AF_1420"/>
<dbReference type="PaxDb" id="224325-AF_1420"/>
<dbReference type="EnsemblBacteria" id="AAB89829">
    <property type="protein sequence ID" value="AAB89829"/>
    <property type="gene ID" value="AF_1420"/>
</dbReference>
<dbReference type="KEGG" id="afu:AF_1420"/>
<dbReference type="eggNOG" id="arCOG01915">
    <property type="taxonomic scope" value="Archaea"/>
</dbReference>
<dbReference type="HOGENOM" id="CLU_024949_3_3_2"/>
<dbReference type="OrthoDB" id="10752at2157"/>
<dbReference type="PhylomeDB" id="O28852"/>
<dbReference type="Proteomes" id="UP000002199">
    <property type="component" value="Chromosome"/>
</dbReference>
<dbReference type="GO" id="GO:0005886">
    <property type="term" value="C:plasma membrane"/>
    <property type="evidence" value="ECO:0007669"/>
    <property type="project" value="InterPro"/>
</dbReference>
<dbReference type="CDD" id="cd08826">
    <property type="entry name" value="SPFH_eoslipins_u1"/>
    <property type="match status" value="1"/>
</dbReference>
<dbReference type="FunFam" id="3.30.479.30:FF:000004">
    <property type="entry name" value="Putative membrane protease family, stomatin"/>
    <property type="match status" value="1"/>
</dbReference>
<dbReference type="Gene3D" id="6.10.250.2090">
    <property type="match status" value="1"/>
</dbReference>
<dbReference type="Gene3D" id="3.30.479.30">
    <property type="entry name" value="Band 7 domain"/>
    <property type="match status" value="1"/>
</dbReference>
<dbReference type="InterPro" id="IPR043202">
    <property type="entry name" value="Band-7_stomatin-like"/>
</dbReference>
<dbReference type="InterPro" id="IPR001107">
    <property type="entry name" value="Band_7"/>
</dbReference>
<dbReference type="InterPro" id="IPR036013">
    <property type="entry name" value="Band_7/SPFH_dom_sf"/>
</dbReference>
<dbReference type="InterPro" id="IPR018080">
    <property type="entry name" value="Band_7/stomatin-like_CS"/>
</dbReference>
<dbReference type="InterPro" id="IPR001972">
    <property type="entry name" value="Stomatin_HflK_fam"/>
</dbReference>
<dbReference type="PANTHER" id="PTHR10264:SF19">
    <property type="entry name" value="AT06885P-RELATED"/>
    <property type="match status" value="1"/>
</dbReference>
<dbReference type="PANTHER" id="PTHR10264">
    <property type="entry name" value="BAND 7 PROTEIN-RELATED"/>
    <property type="match status" value="1"/>
</dbReference>
<dbReference type="Pfam" id="PF01145">
    <property type="entry name" value="Band_7"/>
    <property type="match status" value="1"/>
</dbReference>
<dbReference type="PRINTS" id="PR00721">
    <property type="entry name" value="STOMATIN"/>
</dbReference>
<dbReference type="SMART" id="SM00244">
    <property type="entry name" value="PHB"/>
    <property type="match status" value="1"/>
</dbReference>
<dbReference type="SUPFAM" id="SSF117892">
    <property type="entry name" value="Band 7/SPFH domain"/>
    <property type="match status" value="1"/>
</dbReference>
<dbReference type="PROSITE" id="PS01270">
    <property type="entry name" value="BAND_7"/>
    <property type="match status" value="1"/>
</dbReference>
<protein>
    <recommendedName>
        <fullName>Uncharacterized protein AF_1420</fullName>
    </recommendedName>
</protein>
<evidence type="ECO:0000255" key="1"/>
<evidence type="ECO:0000305" key="2"/>
<keyword id="KW-0472">Membrane</keyword>
<keyword id="KW-1185">Reference proteome</keyword>
<keyword id="KW-0812">Transmembrane</keyword>
<keyword id="KW-1133">Transmembrane helix</keyword>
<reference key="1">
    <citation type="journal article" date="1997" name="Nature">
        <title>The complete genome sequence of the hyperthermophilic, sulphate-reducing archaeon Archaeoglobus fulgidus.</title>
        <authorList>
            <person name="Klenk H.-P."/>
            <person name="Clayton R.A."/>
            <person name="Tomb J.-F."/>
            <person name="White O."/>
            <person name="Nelson K.E."/>
            <person name="Ketchum K.A."/>
            <person name="Dodson R.J."/>
            <person name="Gwinn M.L."/>
            <person name="Hickey E.K."/>
            <person name="Peterson J.D."/>
            <person name="Richardson D.L."/>
            <person name="Kerlavage A.R."/>
            <person name="Graham D.E."/>
            <person name="Kyrpides N.C."/>
            <person name="Fleischmann R.D."/>
            <person name="Quackenbush J."/>
            <person name="Lee N.H."/>
            <person name="Sutton G.G."/>
            <person name="Gill S.R."/>
            <person name="Kirkness E.F."/>
            <person name="Dougherty B.A."/>
            <person name="McKenney K."/>
            <person name="Adams M.D."/>
            <person name="Loftus B.J."/>
            <person name="Peterson S.N."/>
            <person name="Reich C.I."/>
            <person name="McNeil L.K."/>
            <person name="Badger J.H."/>
            <person name="Glodek A."/>
            <person name="Zhou L."/>
            <person name="Overbeek R."/>
            <person name="Gocayne J.D."/>
            <person name="Weidman J.F."/>
            <person name="McDonald L.A."/>
            <person name="Utterback T.R."/>
            <person name="Cotton M.D."/>
            <person name="Spriggs T."/>
            <person name="Artiach P."/>
            <person name="Kaine B.P."/>
            <person name="Sykes S.M."/>
            <person name="Sadow P.W."/>
            <person name="D'Andrea K.P."/>
            <person name="Bowman C."/>
            <person name="Fujii C."/>
            <person name="Garland S.A."/>
            <person name="Mason T.M."/>
            <person name="Olsen G.J."/>
            <person name="Fraser C.M."/>
            <person name="Smith H.O."/>
            <person name="Woese C.R."/>
            <person name="Venter J.C."/>
        </authorList>
    </citation>
    <scope>NUCLEOTIDE SEQUENCE [LARGE SCALE GENOMIC DNA]</scope>
    <source>
        <strain>ATCC 49558 / DSM 4304 / JCM 9628 / NBRC 100126 / VC-16</strain>
    </source>
</reference>
<organism>
    <name type="scientific">Archaeoglobus fulgidus (strain ATCC 49558 / DSM 4304 / JCM 9628 / NBRC 100126 / VC-16)</name>
    <dbReference type="NCBI Taxonomy" id="224325"/>
    <lineage>
        <taxon>Archaea</taxon>
        <taxon>Methanobacteriati</taxon>
        <taxon>Methanobacteriota</taxon>
        <taxon>Archaeoglobi</taxon>
        <taxon>Archaeoglobales</taxon>
        <taxon>Archaeoglobaceae</taxon>
        <taxon>Archaeoglobus</taxon>
    </lineage>
</organism>
<feature type="chain" id="PRO_0000094063" description="Uncharacterized protein AF_1420">
    <location>
        <begin position="1"/>
        <end position="249"/>
    </location>
</feature>
<feature type="transmembrane region" description="Helical" evidence="1">
    <location>
        <begin position="3"/>
        <end position="23"/>
    </location>
</feature>
<gene>
    <name type="ordered locus">AF_1420</name>
</gene>
<name>Y1420_ARCFU</name>